<keyword id="KW-0285">Flavoprotein</keyword>
<keyword id="KW-0288">FMN</keyword>
<keyword id="KW-0521">NADP</keyword>
<keyword id="KW-0560">Oxidoreductase</keyword>
<keyword id="KW-0694">RNA-binding</keyword>
<keyword id="KW-0819">tRNA processing</keyword>
<keyword id="KW-0820">tRNA-binding</keyword>
<protein>
    <recommendedName>
        <fullName evidence="1">tRNA-dihydrouridine(16) synthase</fullName>
        <ecNumber evidence="1">1.3.1.-</ecNumber>
    </recommendedName>
    <alternativeName>
        <fullName evidence="1">U16-specific dihydrouridine synthase</fullName>
        <shortName evidence="1">U16-specific Dus</shortName>
    </alternativeName>
    <alternativeName>
        <fullName evidence="1">tRNA-dihydrouridine synthase C</fullName>
    </alternativeName>
</protein>
<reference key="1">
    <citation type="submission" date="2000-11" db="EMBL/GenBank/DDBJ databases">
        <title>Pseudomonas alcaligenes NCIB 9867 putative heat shock protein and truncated group II intron.</title>
        <authorList>
            <person name="Tan B.-H."/>
            <person name="Yeo C.-C."/>
            <person name="Poh C.-L."/>
        </authorList>
    </citation>
    <scope>NUCLEOTIDE SEQUENCE [GENOMIC DNA]</scope>
    <source>
        <strain>NCIMB 9867 / P25X</strain>
    </source>
</reference>
<evidence type="ECO:0000255" key="1">
    <source>
        <dbReference type="HAMAP-Rule" id="MF_02043"/>
    </source>
</evidence>
<proteinExistence type="inferred from homology"/>
<sequence>MQIALAPMEGLVDEILRDVLTRIGGIDWCVTEFIRVSERLLPAATYHKLAPELFNGSRTRAGTPMRVQFLGSDPQCLADNAAFACTLGAPVIDLNFGCPAKTVNKSRGGAVLLKEPELLHAIVREVRRTVPAEIPVTAKMRLGFEGKEGALDCARALAEGGASQIVVHARTKVEGYKPPAHWEWVARVQEVVGVPVFANGEVWTLDDWRRCREISGVDDIMLGRGLVSRPGLARQIAAVRAGEEPEDMSWAELQPLLLDFWQQARRKLAPRYAPGRLKQWLAMLTRTYPEAVALFAEVRREQDCERIDQLLALSP</sequence>
<dbReference type="EC" id="1.3.1.-" evidence="1"/>
<dbReference type="EMBL" id="AF323438">
    <property type="protein sequence ID" value="AAK11471.1"/>
    <property type="molecule type" value="Genomic_DNA"/>
</dbReference>
<dbReference type="SMR" id="Q9AMN9"/>
<dbReference type="GO" id="GO:0050660">
    <property type="term" value="F:flavin adenine dinucleotide binding"/>
    <property type="evidence" value="ECO:0007669"/>
    <property type="project" value="InterPro"/>
</dbReference>
<dbReference type="GO" id="GO:0010181">
    <property type="term" value="F:FMN binding"/>
    <property type="evidence" value="ECO:0007669"/>
    <property type="project" value="UniProtKB-UniRule"/>
</dbReference>
<dbReference type="GO" id="GO:0000049">
    <property type="term" value="F:tRNA binding"/>
    <property type="evidence" value="ECO:0007669"/>
    <property type="project" value="UniProtKB-UniRule"/>
</dbReference>
<dbReference type="GO" id="GO:0102262">
    <property type="term" value="F:tRNA-dihydrouridine16 synthase activity"/>
    <property type="evidence" value="ECO:0007669"/>
    <property type="project" value="RHEA"/>
</dbReference>
<dbReference type="CDD" id="cd02801">
    <property type="entry name" value="DUS_like_FMN"/>
    <property type="match status" value="1"/>
</dbReference>
<dbReference type="Gene3D" id="3.20.20.70">
    <property type="entry name" value="Aldolase class I"/>
    <property type="match status" value="1"/>
</dbReference>
<dbReference type="Gene3D" id="1.20.225.30">
    <property type="entry name" value="Dihydrouridine synthase, C-terminal recognition domain"/>
    <property type="match status" value="1"/>
</dbReference>
<dbReference type="HAMAP" id="MF_02043">
    <property type="entry name" value="DusC_subfam"/>
    <property type="match status" value="1"/>
</dbReference>
<dbReference type="InterPro" id="IPR013785">
    <property type="entry name" value="Aldolase_TIM"/>
</dbReference>
<dbReference type="InterPro" id="IPR035587">
    <property type="entry name" value="DUS-like_FMN-bd"/>
</dbReference>
<dbReference type="InterPro" id="IPR001269">
    <property type="entry name" value="DUS_fam"/>
</dbReference>
<dbReference type="InterPro" id="IPR032886">
    <property type="entry name" value="DusC"/>
</dbReference>
<dbReference type="InterPro" id="IPR042270">
    <property type="entry name" value="DusC_C"/>
</dbReference>
<dbReference type="InterPro" id="IPR018517">
    <property type="entry name" value="tRNA_hU_synthase_CS"/>
</dbReference>
<dbReference type="PANTHER" id="PTHR11082">
    <property type="entry name" value="TRNA-DIHYDROURIDINE SYNTHASE"/>
    <property type="match status" value="1"/>
</dbReference>
<dbReference type="PANTHER" id="PTHR11082:SF26">
    <property type="entry name" value="TRNA-DIHYDROURIDINE(16) SYNTHASE"/>
    <property type="match status" value="1"/>
</dbReference>
<dbReference type="Pfam" id="PF01207">
    <property type="entry name" value="Dus"/>
    <property type="match status" value="1"/>
</dbReference>
<dbReference type="PIRSF" id="PIRSF006621">
    <property type="entry name" value="Dus"/>
    <property type="match status" value="1"/>
</dbReference>
<dbReference type="SUPFAM" id="SSF51395">
    <property type="entry name" value="FMN-linked oxidoreductases"/>
    <property type="match status" value="1"/>
</dbReference>
<dbReference type="PROSITE" id="PS01136">
    <property type="entry name" value="UPF0034"/>
    <property type="match status" value="1"/>
</dbReference>
<accession>Q9AMN9</accession>
<feature type="chain" id="PRO_0000162117" description="tRNA-dihydrouridine(16) synthase">
    <location>
        <begin position="1"/>
        <end position="315"/>
    </location>
</feature>
<feature type="active site" description="Proton donor" evidence="1">
    <location>
        <position position="98"/>
    </location>
</feature>
<feature type="binding site" evidence="1">
    <location>
        <begin position="7"/>
        <end position="9"/>
    </location>
    <ligand>
        <name>FMN</name>
        <dbReference type="ChEBI" id="CHEBI:58210"/>
    </ligand>
</feature>
<feature type="binding site" evidence="1">
    <location>
        <position position="68"/>
    </location>
    <ligand>
        <name>FMN</name>
        <dbReference type="ChEBI" id="CHEBI:58210"/>
    </ligand>
</feature>
<feature type="binding site" evidence="1">
    <location>
        <position position="139"/>
    </location>
    <ligand>
        <name>FMN</name>
        <dbReference type="ChEBI" id="CHEBI:58210"/>
    </ligand>
</feature>
<feature type="binding site" evidence="1">
    <location>
        <begin position="199"/>
        <end position="201"/>
    </location>
    <ligand>
        <name>FMN</name>
        <dbReference type="ChEBI" id="CHEBI:58210"/>
    </ligand>
</feature>
<feature type="binding site" evidence="1">
    <location>
        <begin position="223"/>
        <end position="224"/>
    </location>
    <ligand>
        <name>FMN</name>
        <dbReference type="ChEBI" id="CHEBI:58210"/>
    </ligand>
</feature>
<feature type="site" description="Interacts with tRNA; defines subfamily-specific binding signature" evidence="1">
    <location>
        <position position="35"/>
    </location>
</feature>
<feature type="site" description="Interacts with tRNA" evidence="1">
    <location>
        <position position="95"/>
    </location>
</feature>
<feature type="site" description="Interacts with tRNA" evidence="1">
    <location>
        <position position="176"/>
    </location>
</feature>
<feature type="site" description="Interacts with tRNA; defines subfamily-specific binding signature" evidence="1">
    <location>
        <position position="276"/>
    </location>
</feature>
<feature type="site" description="Interacts with tRNA; defines subfamily-specific binding signature" evidence="1">
    <location>
        <position position="278"/>
    </location>
</feature>
<feature type="site" description="Interacts with tRNA; defines subfamily-specific binding signature" evidence="1">
    <location>
        <position position="299"/>
    </location>
</feature>
<gene>
    <name evidence="1" type="primary">dusC</name>
</gene>
<name>DUSC_AQUAC</name>
<comment type="function">
    <text evidence="1">Catalyzes the synthesis of 5,6-dihydrouridine (D), a modified base found in the D-loop of most tRNAs, via the reduction of the C5-C6 double bond in target uridines. Specifically modifies U16 in tRNAs.</text>
</comment>
<comment type="catalytic activity">
    <reaction evidence="1">
        <text>5,6-dihydrouridine(16) in tRNA + NADP(+) = uridine(16) in tRNA + NADPH + H(+)</text>
        <dbReference type="Rhea" id="RHEA:53376"/>
        <dbReference type="Rhea" id="RHEA-COMP:13543"/>
        <dbReference type="Rhea" id="RHEA-COMP:13544"/>
        <dbReference type="ChEBI" id="CHEBI:15378"/>
        <dbReference type="ChEBI" id="CHEBI:57783"/>
        <dbReference type="ChEBI" id="CHEBI:58349"/>
        <dbReference type="ChEBI" id="CHEBI:65315"/>
        <dbReference type="ChEBI" id="CHEBI:74443"/>
    </reaction>
</comment>
<comment type="catalytic activity">
    <reaction evidence="1">
        <text>5,6-dihydrouridine(16) in tRNA + NAD(+) = uridine(16) in tRNA + NADH + H(+)</text>
        <dbReference type="Rhea" id="RHEA:53380"/>
        <dbReference type="Rhea" id="RHEA-COMP:13543"/>
        <dbReference type="Rhea" id="RHEA-COMP:13544"/>
        <dbReference type="ChEBI" id="CHEBI:15378"/>
        <dbReference type="ChEBI" id="CHEBI:57540"/>
        <dbReference type="ChEBI" id="CHEBI:57945"/>
        <dbReference type="ChEBI" id="CHEBI:65315"/>
        <dbReference type="ChEBI" id="CHEBI:74443"/>
    </reaction>
</comment>
<comment type="cofactor">
    <cofactor evidence="1">
        <name>FMN</name>
        <dbReference type="ChEBI" id="CHEBI:58210"/>
    </cofactor>
</comment>
<comment type="similarity">
    <text evidence="1">Belongs to the Dus family. DusC subfamily.</text>
</comment>
<organism>
    <name type="scientific">Aquipseudomonas alcaligenes</name>
    <name type="common">Pseudomonas alcaligenes</name>
    <dbReference type="NCBI Taxonomy" id="43263"/>
    <lineage>
        <taxon>Bacteria</taxon>
        <taxon>Pseudomonadati</taxon>
        <taxon>Pseudomonadota</taxon>
        <taxon>Gammaproteobacteria</taxon>
        <taxon>Pseudomonadales</taxon>
        <taxon>Pseudomonadaceae</taxon>
        <taxon>Aquipseudomonas</taxon>
    </lineage>
</organism>